<name>PSR2_PHYIT</name>
<comment type="function">
    <text evidence="1 3 4">Secreted effector that possesses RNA silencing suppression activity by inhibiting the biogenesis of small RNAs in the host plant to promote enhanced susceptibility of host to the pathogen during infection (PubMed:25387135, PubMed:27503598). Interferes with secondary siRNA production by associating with host dsRNA-binding protein DRB4 (By similarity). Inhibits the host salicylic acid pathway during infection (By similarity).</text>
</comment>
<comment type="subunit">
    <text evidence="1">Interacts with host dsRNA-binding protein DRB4.</text>
</comment>
<comment type="subcellular location">
    <subcellularLocation>
        <location evidence="7">Secreted</location>
    </subcellularLocation>
    <subcellularLocation>
        <location evidence="7">Host cell</location>
    </subcellularLocation>
</comment>
<comment type="induction">
    <text evidence="4">The expression is highest in the biotrophic phase of the pathogen.</text>
</comment>
<comment type="domain">
    <text evidence="7">The RxLR-dEER motif acts to carry the protein into the host cell cytoplasm through binding to cell surface phosphatidylinositol-3-phosphate.</text>
</comment>
<comment type="domain">
    <text evidence="1">The C-terminal region (residues 87 to 760) consists of seven imperfect tandem repeats, including one W-Y motif (WY1) and six L-W-Y motifs (LWY2 to LWY7) (By similarity). WY1 forms a 3 alpha-helix fold with one hydrophobic core and each L-W-Y motif forms a highly conserved fold consisting of 5 alpha-helices (By similarity). The units contribute differently to the virulence since WY1, LWY2 and LWY6 are important for the ability to suppress the biogenesis of small RNA in host and virulence activity of the pathogen, whereas LWY3, LWY4, LWY5 and LWY7 are dispensable for PSR2 function (By similarity). WY1 and LWY2 are sufficient for association with DRB4, suppress gene silencing and promote infection (By similarity). These units may function as basic building blocks of Phytophthora effectors to enable virulence activity and accelerate the evolution of novel functions (By similarity).</text>
</comment>
<comment type="similarity">
    <text evidence="6">Belongs to the RxLR effector family.</text>
</comment>
<dbReference type="EMBL" id="DS028155">
    <property type="protein sequence ID" value="EEY63424.1"/>
    <property type="molecule type" value="Genomic_DNA"/>
</dbReference>
<dbReference type="RefSeq" id="XP_002898309.1">
    <property type="nucleotide sequence ID" value="XM_002898263.1"/>
</dbReference>
<dbReference type="SMR" id="D0NRS4"/>
<dbReference type="STRING" id="403677.D0NRS4"/>
<dbReference type="EnsemblProtists" id="PITG_15152T0">
    <property type="protein sequence ID" value="PITG_15152T0"/>
    <property type="gene ID" value="PITG_15152"/>
</dbReference>
<dbReference type="GeneID" id="9476029"/>
<dbReference type="KEGG" id="pif:PITG_15152"/>
<dbReference type="VEuPathDB" id="FungiDB:PITG_15152"/>
<dbReference type="eggNOG" id="ENOG502SS1M">
    <property type="taxonomic scope" value="Eukaryota"/>
</dbReference>
<dbReference type="HOGENOM" id="CLU_021192_3_0_1"/>
<dbReference type="InParanoid" id="D0NRS4"/>
<dbReference type="OMA" id="TLYMKTD"/>
<dbReference type="OrthoDB" id="122386at2759"/>
<dbReference type="Proteomes" id="UP000006643">
    <property type="component" value="Partially assembled WGS sequence"/>
</dbReference>
<dbReference type="GO" id="GO:0005576">
    <property type="term" value="C:extracellular region"/>
    <property type="evidence" value="ECO:0007669"/>
    <property type="project" value="UniProtKB-SubCell"/>
</dbReference>
<dbReference type="GO" id="GO:0043657">
    <property type="term" value="C:host cell"/>
    <property type="evidence" value="ECO:0007669"/>
    <property type="project" value="UniProtKB-SubCell"/>
</dbReference>
<dbReference type="InterPro" id="IPR054463">
    <property type="entry name" value="PexRD54_WY"/>
</dbReference>
<dbReference type="Pfam" id="PF22748">
    <property type="entry name" value="PexRD54_WY"/>
    <property type="match status" value="4"/>
</dbReference>
<gene>
    <name evidence="5" type="primary">PSR2</name>
    <name type="ORF">PITG_15152</name>
</gene>
<sequence>MGCRYAVLALAVAYFAGSIAANDSQIVAVKGPASIRFTPAIHVVRGRFLRAANTADERNEDRGINLKSMPGFEKIASLFTKKNTPGPLLSWFEKKKSPDYVFLKLKINKGKQQLFDHPDWNVWVQYTTSVVKSDPEEAMIAALRTHYTDDILSKLLESAKNVPKTSGLATKMQMEHWVASKTPSQMFQFLRLDKVRNGVLDDPTLSIWINYMKLYNSKPVNKKQQVTLVSMLTTHYKDRGVLDIIEAAKKVPKTAPAARQLEMEQIQFWLKNGKSPDELLTVLSLDKAGNQLLASPRFKFWSKYVDNYNRDFPDEATTVMATLRNQLGDEDITPILIAAGKVPSTEKAAAKLQAEQFKSWLRENEDPAKVFQLLKLDNSADDLLGSPQFKLWGKYVEDLNLKPEHNDLQVSIITILRKNYGDDVLGNMVLAGKKAPSTSFMARRLEDELYKGWIAAGSSPDGVFKHLKFDKAGENVIQSPLWGLYTKFLEHYYKSFPTPMMSALAKGYDGDALAKLLIAAEKIPTSNTLATKLQTGQIQRWLDDKDQPGKIFKALLLDDMADDILTSPLFNTWTRYLDEFNKKFPDEKVSMTDTFRTSLDDETLKSLLITAKELPDMKTLSTKLQTVQIERWLASKTSPEDAFAVLALNKAGGNVLSKPLLNTWAAYLESFNAKFPRSRVSMIDTFREFFGDKALLTTLAAAKEVESTKKVATSLQDSLLSKWVLAKKPPSGVAKLVGTDEAGAKLLKTYTTKYMERYGQ</sequence>
<proteinExistence type="evidence at transcript level"/>
<protein>
    <recommendedName>
        <fullName evidence="5">RxLR effector protein PSR2</fullName>
    </recommendedName>
    <alternativeName>
        <fullName evidence="5">Suppressor of RNA silencing protein 2</fullName>
    </alternativeName>
</protein>
<accession>D0NRS4</accession>
<evidence type="ECO:0000250" key="1">
    <source>
        <dbReference type="UniProtKB" id="E0W4V5"/>
    </source>
</evidence>
<evidence type="ECO:0000255" key="2"/>
<evidence type="ECO:0000269" key="3">
    <source>
    </source>
</evidence>
<evidence type="ECO:0000269" key="4">
    <source>
    </source>
</evidence>
<evidence type="ECO:0000303" key="5">
    <source>
    </source>
</evidence>
<evidence type="ECO:0000305" key="6"/>
<evidence type="ECO:0000305" key="7">
    <source>
    </source>
</evidence>
<feature type="signal peptide" evidence="2">
    <location>
        <begin position="1"/>
        <end position="21"/>
    </location>
</feature>
<feature type="chain" id="PRO_5003012325" description="RxLR effector protein PSR2">
    <location>
        <begin position="22"/>
        <end position="760"/>
    </location>
</feature>
<feature type="repeat" description="WY1" evidence="1">
    <location>
        <begin position="87"/>
        <end position="134"/>
    </location>
</feature>
<feature type="repeat" description="LWY2" evidence="1">
    <location>
        <begin position="135"/>
        <end position="221"/>
    </location>
</feature>
<feature type="repeat" description="LWY3" evidence="1">
    <location>
        <begin position="222"/>
        <end position="312"/>
    </location>
</feature>
<feature type="repeat" description="LWY4" evidence="1">
    <location>
        <begin position="313"/>
        <end position="403"/>
    </location>
</feature>
<feature type="repeat" description="LWY5" evidence="1">
    <location>
        <begin position="404"/>
        <end position="496"/>
    </location>
</feature>
<feature type="repeat" description="LWY6" evidence="1">
    <location>
        <begin position="497"/>
        <end position="584"/>
    </location>
</feature>
<feature type="repeat" description="LWY7" evidence="1">
    <location>
        <begin position="585"/>
        <end position="760"/>
    </location>
</feature>
<feature type="region of interest" description="7 X 93 AA tandem repeats" evidence="1">
    <location>
        <begin position="87"/>
        <end position="760"/>
    </location>
</feature>
<feature type="short sequence motif" description="RxLR-dEER" evidence="7">
    <location>
        <begin position="47"/>
        <end position="62"/>
    </location>
</feature>
<reference key="1">
    <citation type="journal article" date="2009" name="Nature">
        <title>Genome sequence and analysis of the Irish potato famine pathogen Phytophthora infestans.</title>
        <authorList>
            <consortium name="The Broad Institute Genome Sequencing Platform"/>
            <person name="Haas B.J."/>
            <person name="Kamoun S."/>
            <person name="Zody M.C."/>
            <person name="Jiang R.H."/>
            <person name="Handsaker R.E."/>
            <person name="Cano L.M."/>
            <person name="Grabherr M."/>
            <person name="Kodira C.D."/>
            <person name="Raffaele S."/>
            <person name="Torto-Alalibo T."/>
            <person name="Bozkurt T.O."/>
            <person name="Ah-Fong A.M."/>
            <person name="Alvarado L."/>
            <person name="Anderson V.L."/>
            <person name="Armstrong M.R."/>
            <person name="Avrova A."/>
            <person name="Baxter L."/>
            <person name="Beynon J."/>
            <person name="Boevink P.C."/>
            <person name="Bollmann S.R."/>
            <person name="Bos J.I."/>
            <person name="Bulone V."/>
            <person name="Cai G."/>
            <person name="Cakir C."/>
            <person name="Carrington J.C."/>
            <person name="Chawner M."/>
            <person name="Conti L."/>
            <person name="Costanzo S."/>
            <person name="Ewan R."/>
            <person name="Fahlgren N."/>
            <person name="Fischbach M.A."/>
            <person name="Fugelstad J."/>
            <person name="Gilroy E.M."/>
            <person name="Gnerre S."/>
            <person name="Green P.J."/>
            <person name="Grenville-Briggs L.J."/>
            <person name="Griffith J."/>
            <person name="Grunwald N.J."/>
            <person name="Horn K."/>
            <person name="Horner N.R."/>
            <person name="Hu C.H."/>
            <person name="Huitema E."/>
            <person name="Jeong D.H."/>
            <person name="Jones A.M."/>
            <person name="Jones J.D."/>
            <person name="Jones R.W."/>
            <person name="Karlsson E.K."/>
            <person name="Kunjeti S.G."/>
            <person name="Lamour K."/>
            <person name="Liu Z."/>
            <person name="Ma L."/>
            <person name="Maclean D."/>
            <person name="Chibucos M.C."/>
            <person name="McDonald H."/>
            <person name="McWalters J."/>
            <person name="Meijer H.J."/>
            <person name="Morgan W."/>
            <person name="Morris P.F."/>
            <person name="Munro C.A."/>
            <person name="O'Neill K."/>
            <person name="Ospina-Giraldo M."/>
            <person name="Pinzon A."/>
            <person name="Pritchard L."/>
            <person name="Ramsahoye B."/>
            <person name="Ren Q."/>
            <person name="Restrepo S."/>
            <person name="Roy S."/>
            <person name="Sadanandom A."/>
            <person name="Savidor A."/>
            <person name="Schornack S."/>
            <person name="Schwartz D.C."/>
            <person name="Schumann U.D."/>
            <person name="Schwessinger B."/>
            <person name="Seyer L."/>
            <person name="Sharpe T."/>
            <person name="Silvar C."/>
            <person name="Song J."/>
            <person name="Studholme D.J."/>
            <person name="Sykes S."/>
            <person name="Thines M."/>
            <person name="van de Vondervoort P.J."/>
            <person name="Phuntumart V."/>
            <person name="Wawra S."/>
            <person name="Weide R."/>
            <person name="Win J."/>
            <person name="Young C."/>
            <person name="Zhou S."/>
            <person name="Fry W."/>
            <person name="Meyers B.C."/>
            <person name="van West P."/>
            <person name="Ristaino J."/>
            <person name="Govers F."/>
            <person name="Birch P.R."/>
            <person name="Whisson S.C."/>
            <person name="Judelson H.S."/>
            <person name="Nusbaum C."/>
        </authorList>
    </citation>
    <scope>NUCLEOTIDE SEQUENCE [LARGE SCALE GENOMIC DNA]</scope>
    <source>
        <strain>T30-4</strain>
    </source>
</reference>
<reference key="2">
    <citation type="journal article" date="2014" name="Mol. Plant Microbe Interact.">
        <title>Phytophthora suppressor of RNA silencing 2 is a conserved RxLR effector that promotes infection in soybean and Arabidopsis thaliana.</title>
        <authorList>
            <person name="Xiong Q."/>
            <person name="Ye W."/>
            <person name="Choi D."/>
            <person name="Wong J."/>
            <person name="Qiao Y."/>
            <person name="Tao K."/>
            <person name="Wang Y."/>
            <person name="Ma W."/>
        </authorList>
    </citation>
    <scope>FUNCTION</scope>
</reference>
<reference key="3">
    <citation type="journal article" date="2017" name="Mol. Plant Pathol.">
        <title>Signatures of selection and host-adapted gene expression of the Phytophthora infestans RNA silencing suppressor PSR2.</title>
        <authorList>
            <person name="de Vries S."/>
            <person name="von Dahlen J.K."/>
            <person name="Uhlmann C."/>
            <person name="Schnake A."/>
            <person name="Kloesges T."/>
            <person name="Rose L.E."/>
        </authorList>
    </citation>
    <scope>FUNCTION</scope>
    <scope>INDUCTION</scope>
</reference>
<organism>
    <name type="scientific">Phytophthora infestans (strain T30-4)</name>
    <name type="common">Potato late blight agent</name>
    <dbReference type="NCBI Taxonomy" id="403677"/>
    <lineage>
        <taxon>Eukaryota</taxon>
        <taxon>Sar</taxon>
        <taxon>Stramenopiles</taxon>
        <taxon>Oomycota</taxon>
        <taxon>Peronosporales</taxon>
        <taxon>Peronosporaceae</taxon>
        <taxon>Phytophthora</taxon>
    </lineage>
</organism>
<keyword id="KW-1185">Reference proteome</keyword>
<keyword id="KW-0677">Repeat</keyword>
<keyword id="KW-0964">Secreted</keyword>
<keyword id="KW-0732">Signal</keyword>
<keyword id="KW-0843">Virulence</keyword>